<sequence length="593" mass="67867">MNQDAVAKALLGMAEALRTQDPPKLKMAIKCARSTLSMEISDEMKAICNLQLGKLLFFYTDNFELAKNHLQCAYDKMSAMGTFYTRDKMNAISMLADLHIHYQQWPLTSIKATIRHEITTTRGFPALSNKLMFQLIELMKIDKDVEGAIEMCQLAINSSHADPKMELYFRIAKTLVTYQLMHEEPDISDVTRIGSMIKVMENSTTSDKAHLECIKDFYVCTKLAYMFYEGKSRTSRQLLRQIQKSQTSGETKIHGIRWLGEPSITLLACVMNQICALVQSNTDRVEKYYHLVIKHADEIIFKSTRSPQEPGVVRCINMIKMTTLEMMACCNVLACRPQKTLHNVRDMLEWSNRTSGPLLTRYFTPHIHYILGLQCCYFRQHENAENHFRAAMKKLHKEDITAHNTMALLNLNLAITYLNQLKMADYYEVSENLTAPKISSCSQMLKNNVKLLSAFFAYITNKLNECKLLSHEVLDDSKAEDFFRLHGLGLLLLSLVTDVDEKGVRPTVDWSKKSHDHVVILFSHSLYEKILLAAGYDPKSELMKMVVSEQLASRRMLSVENLTPLVANMPASKLLQWFDGDPFKLLPRDETVL</sequence>
<evidence type="ECO:0000250" key="1">
    <source>
        <dbReference type="UniProtKB" id="Q9Y6X3"/>
    </source>
</evidence>
<evidence type="ECO:0000269" key="2">
    <source>
    </source>
</evidence>
<evidence type="ECO:0000269" key="3">
    <source>
    </source>
</evidence>
<evidence type="ECO:0000269" key="4">
    <source>
    </source>
</evidence>
<evidence type="ECO:0000305" key="5"/>
<evidence type="ECO:0000312" key="6">
    <source>
        <dbReference type="WormBase" id="C09H6.3"/>
    </source>
</evidence>
<proteinExistence type="evidence at transcript level"/>
<reference key="1">
    <citation type="journal article" date="1998" name="Science">
        <title>Genome sequence of the nematode C. elegans: a platform for investigating biology.</title>
        <authorList>
            <consortium name="The C. elegans sequencing consortium"/>
        </authorList>
    </citation>
    <scope>NUCLEOTIDE SEQUENCE [LARGE SCALE GENOMIC DNA]</scope>
    <source>
        <strain>Bristol N2</strain>
    </source>
</reference>
<reference key="2">
    <citation type="journal article" date="1995" name="Genetics">
        <title>Viable maternal-effect mutations that affect the development of the nematode Caenorhabditis elegans.</title>
        <authorList>
            <person name="Hekimi S."/>
            <person name="Boutis P."/>
            <person name="Lakowski B."/>
        </authorList>
    </citation>
    <scope>DISRUPTION PHENOTYPE</scope>
</reference>
<reference key="3">
    <citation type="journal article" date="1997" name="Development">
        <title>Cellular and axonal migrations are misguided along both body axes in the maternal-effect mau-2 mutants of Caenorhabditis elegans.</title>
        <authorList>
            <person name="Takagi S."/>
            <person name="Benard C."/>
            <person name="Pak J."/>
            <person name="Livingstone D."/>
            <person name="Hekimi S."/>
        </authorList>
    </citation>
    <scope>DISRUPTION PHENOTYPE</scope>
</reference>
<reference key="4">
    <citation type="journal article" date="2004" name="Development">
        <title>mau-2 acts cell-autonomously to guide axonal migrations in Caenorhabditis elegans.</title>
        <authorList>
            <person name="Benard C.Y."/>
            <person name="Kebir H."/>
            <person name="Takagi S."/>
            <person name="Hekimi S."/>
        </authorList>
    </citation>
    <scope>FUNCTION</scope>
    <scope>DEVELOPMENTAL STAGE</scope>
    <scope>SUBCELLULAR LOCATION</scope>
</reference>
<gene>
    <name evidence="6" type="primary">mau-2</name>
    <name evidence="6" type="ORF">C09H6.3</name>
</gene>
<keyword id="KW-0131">Cell cycle</keyword>
<keyword id="KW-0132">Cell division</keyword>
<keyword id="KW-0159">Chromosome partition</keyword>
<keyword id="KW-0963">Cytoplasm</keyword>
<keyword id="KW-0217">Developmental protein</keyword>
<keyword id="KW-0498">Mitosis</keyword>
<keyword id="KW-0539">Nucleus</keyword>
<keyword id="KW-1185">Reference proteome</keyword>
<accession>O17581</accession>
<organism>
    <name type="scientific">Caenorhabditis elegans</name>
    <dbReference type="NCBI Taxonomy" id="6239"/>
    <lineage>
        <taxon>Eukaryota</taxon>
        <taxon>Metazoa</taxon>
        <taxon>Ecdysozoa</taxon>
        <taxon>Nematoda</taxon>
        <taxon>Chromadorea</taxon>
        <taxon>Rhabditida</taxon>
        <taxon>Rhabditina</taxon>
        <taxon>Rhabditomorpha</taxon>
        <taxon>Rhabditoidea</taxon>
        <taxon>Rhabditidae</taxon>
        <taxon>Peloderinae</taxon>
        <taxon>Caenorhabditis</taxon>
    </lineage>
</organism>
<protein>
    <recommendedName>
        <fullName>Maternal uncoordinated protein 2</fullName>
    </recommendedName>
    <alternativeName>
        <fullName>Cohesin loading complex subunit SCC4 homolog</fullName>
    </alternativeName>
</protein>
<name>SCC4_CAEEL</name>
<comment type="function">
    <text evidence="1 2">Plays an important role in the loading of the cohesin complex on to DNA (By similarity). Forms a heterodimeric complex (also known as cohesin loading complex) with scc-2/SCC2 which mediates the loading of the cohesin complex onto chromatin (By similarity). Required for normal development until the fourth larval stage. Functions cell autonomously to guide migrations during the development of the nervous system. Participates in the guidance of mechanosensory neuron AVM by a slt-1-independent mechanism. Regulates chromosome segregation in early embryos.</text>
</comment>
<comment type="subunit">
    <text evidence="1">May heterodimerize with scc-2/SCC2 to form the cohesin loading complex.</text>
</comment>
<comment type="subcellular location">
    <subcellularLocation>
        <location evidence="2">Nucleus</location>
        <location evidence="2">Nucleoplasm</location>
    </subcellularLocation>
    <subcellularLocation>
        <location evidence="2">Cytoplasm</location>
    </subcellularLocation>
    <text>Binds to chromatin from the end of mitosis until prophase. Localizes to the cytoplasm of neurons.</text>
</comment>
<comment type="developmental stage">
    <text evidence="2">Ubiquitously expressed in embryos by late gastrulation. Becomes predominantly expressed in the nervous system as morphogenesis progresses.</text>
</comment>
<comment type="disruption phenotype">
    <text evidence="3 4">Chromosomal, neuroanatomical, guidance and egg-laying defects. Altering the activity of both the dorsal repellent slt-1 and mau-2 leads to the abnormal dorsal projection of the AVM axon. Migrating cells and axons are mispositioned along both the antero-posterior and dorsoventral body axes.</text>
</comment>
<comment type="similarity">
    <text evidence="5">Belongs to the SCC4/mau-2 family.</text>
</comment>
<feature type="chain" id="PRO_0000382726" description="Maternal uncoordinated protein 2">
    <location>
        <begin position="1"/>
        <end position="593"/>
    </location>
</feature>
<dbReference type="EMBL" id="BX284601">
    <property type="protein sequence ID" value="CAB03867.1"/>
    <property type="molecule type" value="Genomic_DNA"/>
</dbReference>
<dbReference type="PIR" id="T19169">
    <property type="entry name" value="T19169"/>
</dbReference>
<dbReference type="RefSeq" id="NP_492228.1">
    <property type="nucleotide sequence ID" value="NM_059827.7"/>
</dbReference>
<dbReference type="BioGRID" id="38032">
    <property type="interactions" value="3"/>
</dbReference>
<dbReference type="FunCoup" id="O17581">
    <property type="interactions" value="2999"/>
</dbReference>
<dbReference type="STRING" id="6239.C09H6.3.1"/>
<dbReference type="PaxDb" id="6239-C09H6.3"/>
<dbReference type="PeptideAtlas" id="O17581"/>
<dbReference type="EnsemblMetazoa" id="C09H6.3.1">
    <property type="protein sequence ID" value="C09H6.3.1"/>
    <property type="gene ID" value="WBGene00003136"/>
</dbReference>
<dbReference type="GeneID" id="172598"/>
<dbReference type="KEGG" id="cel:CELE_C09H6.3"/>
<dbReference type="AGR" id="WB:WBGene00003136"/>
<dbReference type="CTD" id="172598"/>
<dbReference type="WormBase" id="C09H6.3">
    <property type="protein sequence ID" value="CE15611"/>
    <property type="gene ID" value="WBGene00003136"/>
    <property type="gene designation" value="mau-2"/>
</dbReference>
<dbReference type="eggNOG" id="KOG2300">
    <property type="taxonomic scope" value="Eukaryota"/>
</dbReference>
<dbReference type="GeneTree" id="ENSGT00390000012198"/>
<dbReference type="HOGENOM" id="CLU_030238_0_0_1"/>
<dbReference type="InParanoid" id="O17581"/>
<dbReference type="OMA" id="MELYFRI"/>
<dbReference type="OrthoDB" id="5565328at2759"/>
<dbReference type="PhylomeDB" id="O17581"/>
<dbReference type="Reactome" id="R-CEL-2470946">
    <property type="pathway name" value="Cohesin Loading onto Chromatin"/>
</dbReference>
<dbReference type="PRO" id="PR:O17581"/>
<dbReference type="Proteomes" id="UP000001940">
    <property type="component" value="Chromosome I"/>
</dbReference>
<dbReference type="Bgee" id="WBGene00003136">
    <property type="expression patterns" value="Expressed in embryo and 4 other cell types or tissues"/>
</dbReference>
<dbReference type="GO" id="GO:0030424">
    <property type="term" value="C:axon"/>
    <property type="evidence" value="ECO:0000314"/>
    <property type="project" value="WormBase"/>
</dbReference>
<dbReference type="GO" id="GO:0000785">
    <property type="term" value="C:chromatin"/>
    <property type="evidence" value="ECO:0000250"/>
    <property type="project" value="UniProtKB"/>
</dbReference>
<dbReference type="GO" id="GO:0005737">
    <property type="term" value="C:cytoplasm"/>
    <property type="evidence" value="ECO:0000314"/>
    <property type="project" value="WormBase"/>
</dbReference>
<dbReference type="GO" id="GO:0005654">
    <property type="term" value="C:nucleoplasm"/>
    <property type="evidence" value="ECO:0000250"/>
    <property type="project" value="UniProtKB"/>
</dbReference>
<dbReference type="GO" id="GO:0005634">
    <property type="term" value="C:nucleus"/>
    <property type="evidence" value="ECO:0000250"/>
    <property type="project" value="UniProtKB"/>
</dbReference>
<dbReference type="GO" id="GO:0032116">
    <property type="term" value="C:SMC loading complex"/>
    <property type="evidence" value="ECO:0000250"/>
    <property type="project" value="UniProtKB"/>
</dbReference>
<dbReference type="GO" id="GO:0033564">
    <property type="term" value="P:anterior/posterior axon guidance"/>
    <property type="evidence" value="ECO:0000315"/>
    <property type="project" value="WormBase"/>
</dbReference>
<dbReference type="GO" id="GO:0051301">
    <property type="term" value="P:cell division"/>
    <property type="evidence" value="ECO:0007669"/>
    <property type="project" value="UniProtKB-KW"/>
</dbReference>
<dbReference type="GO" id="GO:0007059">
    <property type="term" value="P:chromosome segregation"/>
    <property type="evidence" value="ECO:0007669"/>
    <property type="project" value="UniProtKB-KW"/>
</dbReference>
<dbReference type="GO" id="GO:0033563">
    <property type="term" value="P:dorsal/ventral axon guidance"/>
    <property type="evidence" value="ECO:0000315"/>
    <property type="project" value="WormBase"/>
</dbReference>
<dbReference type="GO" id="GO:0018991">
    <property type="term" value="P:egg-laying behavior"/>
    <property type="evidence" value="ECO:0000315"/>
    <property type="project" value="WormBase"/>
</dbReference>
<dbReference type="GO" id="GO:0034088">
    <property type="term" value="P:maintenance of mitotic sister chromatid cohesion"/>
    <property type="evidence" value="ECO:0000250"/>
    <property type="project" value="UniProtKB"/>
</dbReference>
<dbReference type="InterPro" id="IPR019440">
    <property type="entry name" value="MAU2"/>
</dbReference>
<dbReference type="PANTHER" id="PTHR21394">
    <property type="entry name" value="MAU2 CHROMATID COHESION FACTOR HOMOLOG"/>
    <property type="match status" value="1"/>
</dbReference>